<proteinExistence type="inferred from homology"/>
<name>CBIN_SALCH</name>
<gene>
    <name evidence="1" type="primary">cbiN</name>
    <name type="ordered locus">SCH_2030</name>
</gene>
<organism>
    <name type="scientific">Salmonella choleraesuis (strain SC-B67)</name>
    <dbReference type="NCBI Taxonomy" id="321314"/>
    <lineage>
        <taxon>Bacteria</taxon>
        <taxon>Pseudomonadati</taxon>
        <taxon>Pseudomonadota</taxon>
        <taxon>Gammaproteobacteria</taxon>
        <taxon>Enterobacterales</taxon>
        <taxon>Enterobacteriaceae</taxon>
        <taxon>Salmonella</taxon>
    </lineage>
</organism>
<feature type="chain" id="PRO_1000019398" description="Cobalt transport protein CbiN">
    <location>
        <begin position="1"/>
        <end position="93"/>
    </location>
</feature>
<feature type="transmembrane region" description="Helical" evidence="1">
    <location>
        <begin position="5"/>
        <end position="25"/>
    </location>
</feature>
<feature type="transmembrane region" description="Helical" evidence="1">
    <location>
        <begin position="63"/>
        <end position="83"/>
    </location>
</feature>
<reference key="1">
    <citation type="journal article" date="2005" name="Nucleic Acids Res.">
        <title>The genome sequence of Salmonella enterica serovar Choleraesuis, a highly invasive and resistant zoonotic pathogen.</title>
        <authorList>
            <person name="Chiu C.-H."/>
            <person name="Tang P."/>
            <person name="Chu C."/>
            <person name="Hu S."/>
            <person name="Bao Q."/>
            <person name="Yu J."/>
            <person name="Chou Y.-Y."/>
            <person name="Wang H.-S."/>
            <person name="Lee Y.-S."/>
        </authorList>
    </citation>
    <scope>NUCLEOTIDE SEQUENCE [LARGE SCALE GENOMIC DNA]</scope>
    <source>
        <strain>SC-B67</strain>
    </source>
</reference>
<evidence type="ECO:0000255" key="1">
    <source>
        <dbReference type="HAMAP-Rule" id="MF_00330"/>
    </source>
</evidence>
<dbReference type="EMBL" id="AE017220">
    <property type="protein sequence ID" value="AAX65936.1"/>
    <property type="molecule type" value="Genomic_DNA"/>
</dbReference>
<dbReference type="RefSeq" id="WP_000753216.1">
    <property type="nucleotide sequence ID" value="NC_006905.1"/>
</dbReference>
<dbReference type="KEGG" id="sec:SCH_2030"/>
<dbReference type="HOGENOM" id="CLU_136197_2_0_6"/>
<dbReference type="UniPathway" id="UPA00148"/>
<dbReference type="Proteomes" id="UP000000538">
    <property type="component" value="Chromosome"/>
</dbReference>
<dbReference type="GO" id="GO:0005886">
    <property type="term" value="C:plasma membrane"/>
    <property type="evidence" value="ECO:0007669"/>
    <property type="project" value="UniProtKB-SubCell"/>
</dbReference>
<dbReference type="GO" id="GO:0015087">
    <property type="term" value="F:cobalt ion transmembrane transporter activity"/>
    <property type="evidence" value="ECO:0007669"/>
    <property type="project" value="UniProtKB-UniRule"/>
</dbReference>
<dbReference type="GO" id="GO:0009236">
    <property type="term" value="P:cobalamin biosynthetic process"/>
    <property type="evidence" value="ECO:0007669"/>
    <property type="project" value="UniProtKB-UniRule"/>
</dbReference>
<dbReference type="HAMAP" id="MF_00330">
    <property type="entry name" value="CbiN"/>
    <property type="match status" value="1"/>
</dbReference>
<dbReference type="InterPro" id="IPR003705">
    <property type="entry name" value="CbiN"/>
</dbReference>
<dbReference type="NCBIfam" id="TIGR01165">
    <property type="entry name" value="cbiN"/>
    <property type="match status" value="1"/>
</dbReference>
<dbReference type="NCBIfam" id="NF002780">
    <property type="entry name" value="PRK02898.1"/>
    <property type="match status" value="1"/>
</dbReference>
<dbReference type="PANTHER" id="PTHR38662">
    <property type="entry name" value="COBALT TRANSPORT PROTEIN CBIN"/>
    <property type="match status" value="1"/>
</dbReference>
<dbReference type="PANTHER" id="PTHR38662:SF1">
    <property type="entry name" value="COBALT TRANSPORT PROTEIN CBIN"/>
    <property type="match status" value="1"/>
</dbReference>
<dbReference type="Pfam" id="PF02553">
    <property type="entry name" value="CbiN"/>
    <property type="match status" value="1"/>
</dbReference>
<sequence>MKKTLMLLAMVVALVILPFFINHGGEYGGSDGEAESQIQALAPQYKPWFQPLYEPASGEIESLLFTLQGSLGAAVIFYILGYCKGKQRRDDRA</sequence>
<keyword id="KW-0997">Cell inner membrane</keyword>
<keyword id="KW-1003">Cell membrane</keyword>
<keyword id="KW-0169">Cobalamin biosynthesis</keyword>
<keyword id="KW-0170">Cobalt</keyword>
<keyword id="KW-0171">Cobalt transport</keyword>
<keyword id="KW-0406">Ion transport</keyword>
<keyword id="KW-0472">Membrane</keyword>
<keyword id="KW-0812">Transmembrane</keyword>
<keyword id="KW-1133">Transmembrane helix</keyword>
<keyword id="KW-0813">Transport</keyword>
<comment type="function">
    <text evidence="1">Part of the energy-coupling factor (ECF) transporter complex CbiMNOQ involved in cobalt import.</text>
</comment>
<comment type="pathway">
    <text evidence="1">Cofactor biosynthesis; adenosylcobalamin biosynthesis.</text>
</comment>
<comment type="subunit">
    <text evidence="1">Forms an energy-coupling factor (ECF) transporter complex composed of an ATP-binding protein (A component, CbiO), a transmembrane protein (T component, CbiQ) and 2 possible substrate-capture proteins (S components, CbiM and CbiN) of unknown stoichimetry.</text>
</comment>
<comment type="subcellular location">
    <subcellularLocation>
        <location evidence="1">Cell inner membrane</location>
        <topology evidence="1">Multi-pass membrane protein</topology>
    </subcellularLocation>
</comment>
<comment type="similarity">
    <text evidence="1">Belongs to the CbiN family.</text>
</comment>
<accession>Q57MX5</accession>
<protein>
    <recommendedName>
        <fullName evidence="1">Cobalt transport protein CbiN</fullName>
    </recommendedName>
    <alternativeName>
        <fullName evidence="1">Energy-coupling factor transporter probable substrate-capture protein CbiN</fullName>
        <shortName evidence="1">ECF transporter S component CbiN</shortName>
    </alternativeName>
</protein>